<keyword id="KW-1015">Disulfide bond</keyword>
<keyword id="KW-0939">Gibberellin signaling pathway</keyword>
<keyword id="KW-1185">Reference proteome</keyword>
<keyword id="KW-0964">Secreted</keyword>
<keyword id="KW-0732">Signal</keyword>
<evidence type="ECO:0000250" key="1"/>
<evidence type="ECO:0000255" key="2"/>
<evidence type="ECO:0000305" key="3"/>
<organism>
    <name type="scientific">Arabidopsis thaliana</name>
    <name type="common">Mouse-ear cress</name>
    <dbReference type="NCBI Taxonomy" id="3702"/>
    <lineage>
        <taxon>Eukaryota</taxon>
        <taxon>Viridiplantae</taxon>
        <taxon>Streptophyta</taxon>
        <taxon>Embryophyta</taxon>
        <taxon>Tracheophyta</taxon>
        <taxon>Spermatophyta</taxon>
        <taxon>Magnoliopsida</taxon>
        <taxon>eudicotyledons</taxon>
        <taxon>Gunneridae</taxon>
        <taxon>Pentapetalae</taxon>
        <taxon>rosids</taxon>
        <taxon>malvids</taxon>
        <taxon>Brassicales</taxon>
        <taxon>Brassicaceae</taxon>
        <taxon>Camelineae</taxon>
        <taxon>Arabidopsis</taxon>
    </lineage>
</organism>
<reference key="1">
    <citation type="journal article" date="2000" name="Nature">
        <title>Sequence and analysis of chromosome 1 of the plant Arabidopsis thaliana.</title>
        <authorList>
            <person name="Theologis A."/>
            <person name="Ecker J.R."/>
            <person name="Palm C.J."/>
            <person name="Federspiel N.A."/>
            <person name="Kaul S."/>
            <person name="White O."/>
            <person name="Alonso J."/>
            <person name="Altafi H."/>
            <person name="Araujo R."/>
            <person name="Bowman C.L."/>
            <person name="Brooks S.Y."/>
            <person name="Buehler E."/>
            <person name="Chan A."/>
            <person name="Chao Q."/>
            <person name="Chen H."/>
            <person name="Cheuk R.F."/>
            <person name="Chin C.W."/>
            <person name="Chung M.K."/>
            <person name="Conn L."/>
            <person name="Conway A.B."/>
            <person name="Conway A.R."/>
            <person name="Creasy T.H."/>
            <person name="Dewar K."/>
            <person name="Dunn P."/>
            <person name="Etgu P."/>
            <person name="Feldblyum T.V."/>
            <person name="Feng J.-D."/>
            <person name="Fong B."/>
            <person name="Fujii C.Y."/>
            <person name="Gill J.E."/>
            <person name="Goldsmith A.D."/>
            <person name="Haas B."/>
            <person name="Hansen N.F."/>
            <person name="Hughes B."/>
            <person name="Huizar L."/>
            <person name="Hunter J.L."/>
            <person name="Jenkins J."/>
            <person name="Johnson-Hopson C."/>
            <person name="Khan S."/>
            <person name="Khaykin E."/>
            <person name="Kim C.J."/>
            <person name="Koo H.L."/>
            <person name="Kremenetskaia I."/>
            <person name="Kurtz D.B."/>
            <person name="Kwan A."/>
            <person name="Lam B."/>
            <person name="Langin-Hooper S."/>
            <person name="Lee A."/>
            <person name="Lee J.M."/>
            <person name="Lenz C.A."/>
            <person name="Li J.H."/>
            <person name="Li Y.-P."/>
            <person name="Lin X."/>
            <person name="Liu S.X."/>
            <person name="Liu Z.A."/>
            <person name="Luros J.S."/>
            <person name="Maiti R."/>
            <person name="Marziali A."/>
            <person name="Militscher J."/>
            <person name="Miranda M."/>
            <person name="Nguyen M."/>
            <person name="Nierman W.C."/>
            <person name="Osborne B.I."/>
            <person name="Pai G."/>
            <person name="Peterson J."/>
            <person name="Pham P.K."/>
            <person name="Rizzo M."/>
            <person name="Rooney T."/>
            <person name="Rowley D."/>
            <person name="Sakano H."/>
            <person name="Salzberg S.L."/>
            <person name="Schwartz J.R."/>
            <person name="Shinn P."/>
            <person name="Southwick A.M."/>
            <person name="Sun H."/>
            <person name="Tallon L.J."/>
            <person name="Tambunga G."/>
            <person name="Toriumi M.J."/>
            <person name="Town C.D."/>
            <person name="Utterback T."/>
            <person name="Van Aken S."/>
            <person name="Vaysberg M."/>
            <person name="Vysotskaia V.S."/>
            <person name="Walker M."/>
            <person name="Wu D."/>
            <person name="Yu G."/>
            <person name="Fraser C.M."/>
            <person name="Venter J.C."/>
            <person name="Davis R.W."/>
        </authorList>
    </citation>
    <scope>NUCLEOTIDE SEQUENCE [LARGE SCALE GENOMIC DNA]</scope>
    <source>
        <strain>cv. Columbia</strain>
    </source>
</reference>
<reference key="2">
    <citation type="journal article" date="2017" name="Plant J.">
        <title>Araport11: a complete reannotation of the Arabidopsis thaliana reference genome.</title>
        <authorList>
            <person name="Cheng C.Y."/>
            <person name="Krishnakumar V."/>
            <person name="Chan A.P."/>
            <person name="Thibaud-Nissen F."/>
            <person name="Schobel S."/>
            <person name="Town C.D."/>
        </authorList>
    </citation>
    <scope>GENOME REANNOTATION</scope>
    <source>
        <strain>cv. Columbia</strain>
    </source>
</reference>
<reference key="3">
    <citation type="submission" date="2004-02" db="EMBL/GenBank/DDBJ databases">
        <title>Arabidopsis cDNA clones.</title>
        <authorList>
            <person name="Kim C.J."/>
            <person name="Chen H."/>
            <person name="Cheuk R.F."/>
            <person name="Shinn P."/>
            <person name="Ecker J.R."/>
        </authorList>
    </citation>
    <scope>NUCLEOTIDE SEQUENCE [LARGE SCALE MRNA]</scope>
    <source>
        <strain>cv. Columbia</strain>
    </source>
</reference>
<proteinExistence type="inferred from homology"/>
<accession>Q6NMQ7</accession>
<accession>Q9CA50</accession>
<name>GASA6_ARATH</name>
<feature type="signal peptide" evidence="2">
    <location>
        <begin position="1"/>
        <end position="23"/>
    </location>
</feature>
<feature type="chain" id="PRO_0000413704" description="Gibberellin-regulated protein 6">
    <location>
        <begin position="24"/>
        <end position="101"/>
    </location>
</feature>
<sequence length="101" mass="11341">MAKLITSFLLLTILFTFVCLTMSKEAEYHPESYGPGSLKSYQCGGQCTRRCSNTKYHKPCMFFCQKCCAKCLCVPPGTYGNKQVCPCYNNWKTQQGGPKCP</sequence>
<gene>
    <name type="primary">GASA6</name>
    <name type="ordered locus">At1g74670</name>
    <name type="ORF">F1M20.35</name>
</gene>
<comment type="function">
    <text evidence="1">Gibberellin-regulated protein that may function in hormonal controlled steps of development such as seed germination, flowering and seed maturation.</text>
</comment>
<comment type="subcellular location">
    <subcellularLocation>
        <location evidence="1">Secreted</location>
    </subcellularLocation>
</comment>
<comment type="PTM">
    <text evidence="1">Six disulfide bonds may be present.</text>
</comment>
<comment type="similarity">
    <text evidence="3">Belongs to the GASA family.</text>
</comment>
<comment type="sequence caution" evidence="3">
    <conflict type="erroneous gene model prediction">
        <sequence resource="EMBL-CDS" id="AAG52379"/>
    </conflict>
</comment>
<protein>
    <recommendedName>
        <fullName>Gibberellin-regulated protein 6</fullName>
    </recommendedName>
    <alternativeName>
        <fullName>GAST1 protein homolog 6</fullName>
    </alternativeName>
</protein>
<dbReference type="EMBL" id="AC011765">
    <property type="protein sequence ID" value="AAG52379.1"/>
    <property type="status" value="ALT_SEQ"/>
    <property type="molecule type" value="Genomic_DNA"/>
</dbReference>
<dbReference type="EMBL" id="CP002684">
    <property type="protein sequence ID" value="AEE35620.1"/>
    <property type="molecule type" value="Genomic_DNA"/>
</dbReference>
<dbReference type="EMBL" id="BT011599">
    <property type="protein sequence ID" value="AAS47605.1"/>
    <property type="molecule type" value="mRNA"/>
</dbReference>
<dbReference type="PIR" id="H96775">
    <property type="entry name" value="H96775"/>
</dbReference>
<dbReference type="RefSeq" id="NP_177605.2">
    <property type="nucleotide sequence ID" value="NM_106125.4"/>
</dbReference>
<dbReference type="SMR" id="Q6NMQ7"/>
<dbReference type="FunCoup" id="Q6NMQ7">
    <property type="interactions" value="20"/>
</dbReference>
<dbReference type="STRING" id="3702.Q6NMQ7"/>
<dbReference type="PaxDb" id="3702-AT1G74670.1"/>
<dbReference type="ProteomicsDB" id="230448"/>
<dbReference type="EnsemblPlants" id="AT1G74670.1">
    <property type="protein sequence ID" value="AT1G74670.1"/>
    <property type="gene ID" value="AT1G74670"/>
</dbReference>
<dbReference type="GeneID" id="843806"/>
<dbReference type="Gramene" id="AT1G74670.1">
    <property type="protein sequence ID" value="AT1G74670.1"/>
    <property type="gene ID" value="AT1G74670"/>
</dbReference>
<dbReference type="KEGG" id="ath:AT1G74670"/>
<dbReference type="Araport" id="AT1G74670"/>
<dbReference type="TAIR" id="AT1G74670">
    <property type="gene designation" value="GASA6"/>
</dbReference>
<dbReference type="eggNOG" id="ENOG502S17T">
    <property type="taxonomic scope" value="Eukaryota"/>
</dbReference>
<dbReference type="HOGENOM" id="CLU_142643_5_1_1"/>
<dbReference type="InParanoid" id="Q6NMQ7"/>
<dbReference type="OMA" id="GHHYNDK"/>
<dbReference type="OrthoDB" id="1886938at2759"/>
<dbReference type="PhylomeDB" id="Q6NMQ7"/>
<dbReference type="PRO" id="PR:Q6NMQ7"/>
<dbReference type="Proteomes" id="UP000006548">
    <property type="component" value="Chromosome 1"/>
</dbReference>
<dbReference type="ExpressionAtlas" id="Q6NMQ7">
    <property type="expression patterns" value="baseline and differential"/>
</dbReference>
<dbReference type="GO" id="GO:0005576">
    <property type="term" value="C:extracellular region"/>
    <property type="evidence" value="ECO:0007669"/>
    <property type="project" value="UniProtKB-SubCell"/>
</dbReference>
<dbReference type="GO" id="GO:0009740">
    <property type="term" value="P:gibberellic acid mediated signaling pathway"/>
    <property type="evidence" value="ECO:0000304"/>
    <property type="project" value="TAIR"/>
</dbReference>
<dbReference type="GO" id="GO:0009750">
    <property type="term" value="P:response to fructose"/>
    <property type="evidence" value="ECO:0000270"/>
    <property type="project" value="TAIR"/>
</dbReference>
<dbReference type="GO" id="GO:0009749">
    <property type="term" value="P:response to glucose"/>
    <property type="evidence" value="ECO:0000270"/>
    <property type="project" value="TAIR"/>
</dbReference>
<dbReference type="GO" id="GO:0009744">
    <property type="term" value="P:response to sucrose"/>
    <property type="evidence" value="ECO:0000270"/>
    <property type="project" value="TAIR"/>
</dbReference>
<dbReference type="InterPro" id="IPR003854">
    <property type="entry name" value="GASA"/>
</dbReference>
<dbReference type="PANTHER" id="PTHR23201">
    <property type="entry name" value="EXTENSIN, PROLINE-RICH PROTEIN"/>
    <property type="match status" value="1"/>
</dbReference>
<dbReference type="PANTHER" id="PTHR23201:SF108">
    <property type="entry name" value="GIBBERELLIN-REGULATED PROTEIN 6"/>
    <property type="match status" value="1"/>
</dbReference>
<dbReference type="Pfam" id="PF02704">
    <property type="entry name" value="GASA"/>
    <property type="match status" value="1"/>
</dbReference>